<comment type="function">
    <text evidence="1">Displays ATPase and GTPase activities.</text>
</comment>
<comment type="similarity">
    <text evidence="1">Belongs to the RapZ-like family.</text>
</comment>
<comment type="sequence caution" evidence="2">
    <conflict type="erroneous initiation">
        <sequence resource="EMBL-CDS" id="ACN15880"/>
    </conflict>
</comment>
<proteinExistence type="inferred from homology"/>
<name>Y2790_DESAH</name>
<keyword id="KW-0067">ATP-binding</keyword>
<keyword id="KW-0342">GTP-binding</keyword>
<keyword id="KW-0547">Nucleotide-binding</keyword>
<keyword id="KW-1185">Reference proteome</keyword>
<gene>
    <name type="ordered locus">HRM2_27900</name>
</gene>
<feature type="chain" id="PRO_0000383234" description="Nucleotide-binding protein HRM2_27900">
    <location>
        <begin position="1"/>
        <end position="293"/>
    </location>
</feature>
<feature type="binding site" evidence="1">
    <location>
        <begin position="11"/>
        <end position="18"/>
    </location>
    <ligand>
        <name>ATP</name>
        <dbReference type="ChEBI" id="CHEBI:30616"/>
    </ligand>
</feature>
<feature type="binding site" evidence="1">
    <location>
        <begin position="62"/>
        <end position="65"/>
    </location>
    <ligand>
        <name>GTP</name>
        <dbReference type="ChEBI" id="CHEBI:37565"/>
    </ligand>
</feature>
<organism>
    <name type="scientific">Desulforapulum autotrophicum (strain ATCC 43914 / DSM 3382 / VKM B-1955 / HRM2)</name>
    <name type="common">Desulfobacterium autotrophicum</name>
    <dbReference type="NCBI Taxonomy" id="177437"/>
    <lineage>
        <taxon>Bacteria</taxon>
        <taxon>Pseudomonadati</taxon>
        <taxon>Thermodesulfobacteriota</taxon>
        <taxon>Desulfobacteria</taxon>
        <taxon>Desulfobacterales</taxon>
        <taxon>Desulfobacteraceae</taxon>
        <taxon>Desulforapulum</taxon>
    </lineage>
</organism>
<dbReference type="EMBL" id="CP001087">
    <property type="protein sequence ID" value="ACN15880.1"/>
    <property type="status" value="ALT_INIT"/>
    <property type="molecule type" value="Genomic_DNA"/>
</dbReference>
<dbReference type="RefSeq" id="WP_041273274.1">
    <property type="nucleotide sequence ID" value="NC_012108.1"/>
</dbReference>
<dbReference type="SMR" id="C0QJ67"/>
<dbReference type="STRING" id="177437.HRM2_27900"/>
<dbReference type="KEGG" id="dat:HRM2_27900"/>
<dbReference type="eggNOG" id="COG1660">
    <property type="taxonomic scope" value="Bacteria"/>
</dbReference>
<dbReference type="HOGENOM" id="CLU_059558_0_0_7"/>
<dbReference type="OrthoDB" id="9784461at2"/>
<dbReference type="Proteomes" id="UP000000442">
    <property type="component" value="Chromosome"/>
</dbReference>
<dbReference type="GO" id="GO:0005524">
    <property type="term" value="F:ATP binding"/>
    <property type="evidence" value="ECO:0007669"/>
    <property type="project" value="UniProtKB-UniRule"/>
</dbReference>
<dbReference type="GO" id="GO:0005525">
    <property type="term" value="F:GTP binding"/>
    <property type="evidence" value="ECO:0007669"/>
    <property type="project" value="UniProtKB-UniRule"/>
</dbReference>
<dbReference type="HAMAP" id="MF_00636">
    <property type="entry name" value="RapZ_like"/>
    <property type="match status" value="1"/>
</dbReference>
<dbReference type="InterPro" id="IPR027417">
    <property type="entry name" value="P-loop_NTPase"/>
</dbReference>
<dbReference type="InterPro" id="IPR005337">
    <property type="entry name" value="RapZ-like"/>
</dbReference>
<dbReference type="InterPro" id="IPR053930">
    <property type="entry name" value="RapZ-like_N"/>
</dbReference>
<dbReference type="InterPro" id="IPR053931">
    <property type="entry name" value="RapZ_C"/>
</dbReference>
<dbReference type="NCBIfam" id="NF003828">
    <property type="entry name" value="PRK05416.1"/>
    <property type="match status" value="1"/>
</dbReference>
<dbReference type="PANTHER" id="PTHR30448">
    <property type="entry name" value="RNASE ADAPTER PROTEIN RAPZ"/>
    <property type="match status" value="1"/>
</dbReference>
<dbReference type="PANTHER" id="PTHR30448:SF0">
    <property type="entry name" value="RNASE ADAPTER PROTEIN RAPZ"/>
    <property type="match status" value="1"/>
</dbReference>
<dbReference type="Pfam" id="PF22740">
    <property type="entry name" value="PapZ_C"/>
    <property type="match status" value="1"/>
</dbReference>
<dbReference type="Pfam" id="PF03668">
    <property type="entry name" value="RapZ-like_N"/>
    <property type="match status" value="1"/>
</dbReference>
<dbReference type="PIRSF" id="PIRSF005052">
    <property type="entry name" value="P-loopkin"/>
    <property type="match status" value="1"/>
</dbReference>
<dbReference type="SUPFAM" id="SSF52540">
    <property type="entry name" value="P-loop containing nucleoside triphosphate hydrolases"/>
    <property type="match status" value="1"/>
</dbReference>
<accession>C0QJ67</accession>
<sequence length="293" mass="33196">MNRQSLFILTGLSGSGKSTAMEAFEDAGYYCVDNMPIELLPKFLDLPLDSDTDINGFAFVMDIRAKQFLSQFPSVLESLGKNGHIPEIIFLEADENILLKRYSQTRRHHPAGQDKSLIESIKSEKSLMLPIRKISKRIIDTSNYNVHQLKAEIRNIAHHHALKPVSMKINLLSFGFKYGIPTDADLVVDMRFLSNPFFVPELKALNGRTKEVKDFVLETIQAKTFLKKYLGLLDYLIPLYTLEGKAYLTIAVGCTGGRHRSVAIAENIFEHLSQRGFEPGIIHRDIDRDTKEL</sequence>
<protein>
    <recommendedName>
        <fullName evidence="1">Nucleotide-binding protein HRM2_27900</fullName>
    </recommendedName>
</protein>
<evidence type="ECO:0000255" key="1">
    <source>
        <dbReference type="HAMAP-Rule" id="MF_00636"/>
    </source>
</evidence>
<evidence type="ECO:0000305" key="2"/>
<reference key="1">
    <citation type="journal article" date="2009" name="Environ. Microbiol.">
        <title>Genome sequence of Desulfobacterium autotrophicum HRM2, a marine sulfate reducer oxidizing organic carbon completely to carbon dioxide.</title>
        <authorList>
            <person name="Strittmatter A.W."/>
            <person name="Liesegang H."/>
            <person name="Rabus R."/>
            <person name="Decker I."/>
            <person name="Amann J."/>
            <person name="Andres S."/>
            <person name="Henne A."/>
            <person name="Fricke W.F."/>
            <person name="Martinez-Arias R."/>
            <person name="Bartels D."/>
            <person name="Goesmann A."/>
            <person name="Krause L."/>
            <person name="Puehler A."/>
            <person name="Klenk H.P."/>
            <person name="Richter M."/>
            <person name="Schuler M."/>
            <person name="Gloeckner F.O."/>
            <person name="Meyerdierks A."/>
            <person name="Gottschalk G."/>
            <person name="Amann R."/>
        </authorList>
    </citation>
    <scope>NUCLEOTIDE SEQUENCE [LARGE SCALE GENOMIC DNA]</scope>
    <source>
        <strain>ATCC 43914 / DSM 3382 / VKM B-1955 / HRM2</strain>
    </source>
</reference>